<feature type="chain" id="PRO_0000137573" description="Probable inorganic pyrophosphatase">
    <location>
        <begin position="1"/>
        <end position="380"/>
    </location>
</feature>
<feature type="binding site" evidence="1">
    <location>
        <position position="198"/>
    </location>
    <ligand>
        <name>Mg(2+)</name>
        <dbReference type="ChEBI" id="CHEBI:18420"/>
        <label>1</label>
    </ligand>
</feature>
<feature type="binding site" evidence="1">
    <location>
        <position position="203"/>
    </location>
    <ligand>
        <name>Mg(2+)</name>
        <dbReference type="ChEBI" id="CHEBI:18420"/>
        <label>1</label>
    </ligand>
</feature>
<feature type="binding site" evidence="1">
    <location>
        <position position="203"/>
    </location>
    <ligand>
        <name>Mg(2+)</name>
        <dbReference type="ChEBI" id="CHEBI:18420"/>
        <label>2</label>
    </ligand>
</feature>
<feature type="binding site" evidence="1">
    <location>
        <position position="235"/>
    </location>
    <ligand>
        <name>Mg(2+)</name>
        <dbReference type="ChEBI" id="CHEBI:18420"/>
        <label>1</label>
    </ligand>
</feature>
<feature type="strand" evidence="3">
    <location>
        <begin position="41"/>
        <end position="43"/>
    </location>
</feature>
<feature type="strand" evidence="3">
    <location>
        <begin position="50"/>
        <end position="54"/>
    </location>
</feature>
<feature type="helix" evidence="3">
    <location>
        <begin position="55"/>
        <end position="60"/>
    </location>
</feature>
<feature type="strand" evidence="3">
    <location>
        <begin position="67"/>
        <end position="75"/>
    </location>
</feature>
<feature type="strand" evidence="3">
    <location>
        <begin position="78"/>
        <end position="86"/>
    </location>
</feature>
<feature type="strand" evidence="3">
    <location>
        <begin position="94"/>
        <end position="101"/>
    </location>
</feature>
<feature type="strand" evidence="3">
    <location>
        <begin position="104"/>
        <end position="108"/>
    </location>
</feature>
<feature type="turn" evidence="3">
    <location>
        <begin position="110"/>
        <end position="113"/>
    </location>
</feature>
<feature type="strand" evidence="3">
    <location>
        <begin position="123"/>
        <end position="129"/>
    </location>
</feature>
<feature type="strand" evidence="3">
    <location>
        <begin position="137"/>
        <end position="139"/>
    </location>
</feature>
<feature type="helix" evidence="3">
    <location>
        <begin position="144"/>
        <end position="146"/>
    </location>
</feature>
<feature type="strand" evidence="3">
    <location>
        <begin position="148"/>
        <end position="150"/>
    </location>
</feature>
<feature type="strand" evidence="3">
    <location>
        <begin position="165"/>
        <end position="170"/>
    </location>
</feature>
<feature type="strand" evidence="3">
    <location>
        <begin position="180"/>
        <end position="183"/>
    </location>
</feature>
<feature type="strand" evidence="3">
    <location>
        <begin position="195"/>
        <end position="197"/>
    </location>
</feature>
<feature type="strand" evidence="3">
    <location>
        <begin position="203"/>
        <end position="206"/>
    </location>
</feature>
<feature type="strand" evidence="3">
    <location>
        <begin position="217"/>
        <end position="230"/>
    </location>
</feature>
<feature type="strand" evidence="3">
    <location>
        <begin position="233"/>
        <end position="242"/>
    </location>
</feature>
<feature type="turn" evidence="3">
    <location>
        <begin position="246"/>
        <end position="250"/>
    </location>
</feature>
<feature type="helix" evidence="3">
    <location>
        <begin position="254"/>
        <end position="260"/>
    </location>
</feature>
<feature type="helix" evidence="3">
    <location>
        <begin position="264"/>
        <end position="274"/>
    </location>
</feature>
<feature type="helix" evidence="3">
    <location>
        <begin position="277"/>
        <end position="280"/>
    </location>
</feature>
<feature type="helix" evidence="3">
    <location>
        <begin position="293"/>
        <end position="320"/>
    </location>
</feature>
<feature type="turn" evidence="3">
    <location>
        <begin position="356"/>
        <end position="359"/>
    </location>
</feature>
<feature type="strand" evidence="3">
    <location>
        <begin position="363"/>
        <end position="367"/>
    </location>
</feature>
<feature type="strand" evidence="3">
    <location>
        <begin position="375"/>
        <end position="377"/>
    </location>
</feature>
<reference key="1">
    <citation type="journal article" date="1999" name="Nature">
        <title>The complete nucleotide sequence of chromosome 3 of Plasmodium falciparum.</title>
        <authorList>
            <person name="Bowman S."/>
            <person name="Lawson D."/>
            <person name="Basham D."/>
            <person name="Brown D."/>
            <person name="Chillingworth T."/>
            <person name="Churcher C.M."/>
            <person name="Craig A."/>
            <person name="Davies R.M."/>
            <person name="Devlin K."/>
            <person name="Feltwell T."/>
            <person name="Gentles S."/>
            <person name="Gwilliam R."/>
            <person name="Hamlin N."/>
            <person name="Harris D."/>
            <person name="Holroyd S."/>
            <person name="Hornsby T."/>
            <person name="Horrocks P."/>
            <person name="Jagels K."/>
            <person name="Jassal B."/>
            <person name="Kyes S."/>
            <person name="McLean J."/>
            <person name="Moule S."/>
            <person name="Mungall K.L."/>
            <person name="Murphy L."/>
            <person name="Oliver K."/>
            <person name="Quail M.A."/>
            <person name="Rajandream M.A."/>
            <person name="Rutter S."/>
            <person name="Skelton J."/>
            <person name="Squares R."/>
            <person name="Squares S."/>
            <person name="Sulston J.E."/>
            <person name="Whitehead S."/>
            <person name="Woodward J.R."/>
            <person name="Newbold C."/>
            <person name="Barrell B.G."/>
        </authorList>
    </citation>
    <scope>NUCLEOTIDE SEQUENCE [LARGE SCALE GENOMIC DNA]</scope>
    <source>
        <strain>3D7</strain>
    </source>
</reference>
<reference key="2">
    <citation type="journal article" date="2002" name="Nature">
        <title>Genome sequence of the human malaria parasite Plasmodium falciparum.</title>
        <authorList>
            <person name="Gardner M.J."/>
            <person name="Hall N."/>
            <person name="Fung E."/>
            <person name="White O."/>
            <person name="Berriman M."/>
            <person name="Hyman R.W."/>
            <person name="Carlton J.M."/>
            <person name="Pain A."/>
            <person name="Nelson K.E."/>
            <person name="Bowman S."/>
            <person name="Paulsen I.T."/>
            <person name="James K.D."/>
            <person name="Eisen J.A."/>
            <person name="Rutherford K.M."/>
            <person name="Salzberg S.L."/>
            <person name="Craig A."/>
            <person name="Kyes S."/>
            <person name="Chan M.-S."/>
            <person name="Nene V."/>
            <person name="Shallom S.J."/>
            <person name="Suh B."/>
            <person name="Peterson J."/>
            <person name="Angiuoli S."/>
            <person name="Pertea M."/>
            <person name="Allen J."/>
            <person name="Selengut J."/>
            <person name="Haft D."/>
            <person name="Mather M.W."/>
            <person name="Vaidya A.B."/>
            <person name="Martin D.M.A."/>
            <person name="Fairlamb A.H."/>
            <person name="Fraunholz M.J."/>
            <person name="Roos D.S."/>
            <person name="Ralph S.A."/>
            <person name="McFadden G.I."/>
            <person name="Cummings L.M."/>
            <person name="Subramanian G.M."/>
            <person name="Mungall C."/>
            <person name="Venter J.C."/>
            <person name="Carucci D.J."/>
            <person name="Hoffman S.L."/>
            <person name="Newbold C."/>
            <person name="Davis R.W."/>
            <person name="Fraser C.M."/>
            <person name="Barrell B.G."/>
        </authorList>
    </citation>
    <scope>NUCLEOTIDE SEQUENCE [LARGE SCALE GENOMIC DNA]</scope>
    <source>
        <strain>3D7</strain>
    </source>
</reference>
<reference key="3">
    <citation type="journal article" date="2002" name="Nature">
        <title>Sequence of Plasmodium falciparum chromosomes 1, 3-9 and 13.</title>
        <authorList>
            <person name="Hall N."/>
            <person name="Pain A."/>
            <person name="Berriman M."/>
            <person name="Churcher C.M."/>
            <person name="Harris B."/>
            <person name="Harris D."/>
            <person name="Mungall K.L."/>
            <person name="Bowman S."/>
            <person name="Atkin R."/>
            <person name="Baker S."/>
            <person name="Barron A."/>
            <person name="Brooks K."/>
            <person name="Buckee C.O."/>
            <person name="Burrows C."/>
            <person name="Cherevach I."/>
            <person name="Chillingworth C."/>
            <person name="Chillingworth T."/>
            <person name="Christodoulou Z."/>
            <person name="Clark L."/>
            <person name="Clark R."/>
            <person name="Corton C."/>
            <person name="Cronin A."/>
            <person name="Davies R.M."/>
            <person name="Davis P."/>
            <person name="Dear P."/>
            <person name="Dearden F."/>
            <person name="Doggett J."/>
            <person name="Feltwell T."/>
            <person name="Goble A."/>
            <person name="Goodhead I."/>
            <person name="Gwilliam R."/>
            <person name="Hamlin N."/>
            <person name="Hance Z."/>
            <person name="Harper D."/>
            <person name="Hauser H."/>
            <person name="Hornsby T."/>
            <person name="Holroyd S."/>
            <person name="Horrocks P."/>
            <person name="Humphray S."/>
            <person name="Jagels K."/>
            <person name="James K.D."/>
            <person name="Johnson D."/>
            <person name="Kerhornou A."/>
            <person name="Knights A."/>
            <person name="Konfortov B."/>
            <person name="Kyes S."/>
            <person name="Larke N."/>
            <person name="Lawson D."/>
            <person name="Lennard N."/>
            <person name="Line A."/>
            <person name="Maddison M."/>
            <person name="Mclean J."/>
            <person name="Mooney P."/>
            <person name="Moule S."/>
            <person name="Murphy L."/>
            <person name="Oliver K."/>
            <person name="Ormond D."/>
            <person name="Price C."/>
            <person name="Quail M.A."/>
            <person name="Rabbinowitsch E."/>
            <person name="Rajandream M.A."/>
            <person name="Rutter S."/>
            <person name="Rutherford K.M."/>
            <person name="Sanders M."/>
            <person name="Simmonds M."/>
            <person name="Seeger K."/>
            <person name="Sharp S."/>
            <person name="Smith R."/>
            <person name="Squares R."/>
            <person name="Squares S."/>
            <person name="Stevens K."/>
            <person name="Taylor K."/>
            <person name="Tivey A."/>
            <person name="Unwin L."/>
            <person name="Whitehead S."/>
            <person name="Woodward J.R."/>
            <person name="Sulston J.E."/>
            <person name="Craig A."/>
            <person name="Newbold C."/>
            <person name="Barrell B.G."/>
        </authorList>
    </citation>
    <scope>NUCLEOTIDE SEQUENCE [LARGE SCALE GENOMIC DNA]</scope>
    <source>
        <strain>3D7</strain>
    </source>
</reference>
<keyword id="KW-0002">3D-structure</keyword>
<keyword id="KW-0378">Hydrolase</keyword>
<keyword id="KW-0460">Magnesium</keyword>
<keyword id="KW-0479">Metal-binding</keyword>
<keyword id="KW-1185">Reference proteome</keyword>
<name>IPYR_PLAF7</name>
<gene>
    <name type="ORF">MAL3P6.3</name>
    <name type="ORF">PFC0710w</name>
</gene>
<organism>
    <name type="scientific">Plasmodium falciparum (isolate 3D7)</name>
    <dbReference type="NCBI Taxonomy" id="36329"/>
    <lineage>
        <taxon>Eukaryota</taxon>
        <taxon>Sar</taxon>
        <taxon>Alveolata</taxon>
        <taxon>Apicomplexa</taxon>
        <taxon>Aconoidasida</taxon>
        <taxon>Haemosporida</taxon>
        <taxon>Plasmodiidae</taxon>
        <taxon>Plasmodium</taxon>
        <taxon>Plasmodium (Laverania)</taxon>
    </lineage>
</organism>
<sequence>MGSKLINVEGGNNQDDNKYNSNNVISINNKVNKNDYFIETNKELKINLNFQNNNIISNIFSNINIYDKISNIFINNKKTYMLKYNNNINEENFFISYFEKKDDNFVPISPWHHIDLKNDDGTYNMIVEITKYNYIKLEIQLREKFNVIKQDKKKGKLRYYHNSIYWNYGALPQTYEYPKHIYQNKSKKNKEALLFTGDNDPLDILDIGSACLKIGQVVPVKILGAFTLIDEGELDWKIIAINKEDKHYEDINSLSDIEKYYPHTLSLLLEWFRSYKMADTKKLNLISKQLYDKKESEDLIMKTHHYYLEFREDVKKLKEEHSKETIKEHDYVNAQNIQFNYDKLNNNDDEPMENNLLEDINITYYKSDSAYKPDLNIWTP</sequence>
<proteinExistence type="evidence at protein level"/>
<dbReference type="EC" id="3.6.1.1"/>
<dbReference type="EMBL" id="AL844502">
    <property type="protein sequence ID" value="CAB11148.1"/>
    <property type="molecule type" value="Genomic_DNA"/>
</dbReference>
<dbReference type="PIR" id="T18509">
    <property type="entry name" value="T18509"/>
</dbReference>
<dbReference type="RefSeq" id="XP_001351233.1">
    <property type="nucleotide sequence ID" value="XM_001351197.1"/>
</dbReference>
<dbReference type="PDB" id="5WRU">
    <property type="method" value="X-ray"/>
    <property type="resolution" value="3.19 A"/>
    <property type="chains" value="A/B/C/D/E=1-380"/>
</dbReference>
<dbReference type="PDBsum" id="5WRU"/>
<dbReference type="SMR" id="O77392"/>
<dbReference type="FunCoup" id="O77392">
    <property type="interactions" value="302"/>
</dbReference>
<dbReference type="STRING" id="36329.O77392"/>
<dbReference type="PaxDb" id="5833-PFC0710w.2"/>
<dbReference type="EnsemblProtists" id="CAB11148">
    <property type="protein sequence ID" value="CAB11148"/>
    <property type="gene ID" value="PF3D7_0316300.1"/>
</dbReference>
<dbReference type="KEGG" id="pfa:PF3D7_0316300.1"/>
<dbReference type="VEuPathDB" id="PlasmoDB:PF3D7_0316300"/>
<dbReference type="InParanoid" id="O77392"/>
<dbReference type="OrthoDB" id="1608002at2759"/>
<dbReference type="PhylomeDB" id="O77392"/>
<dbReference type="Reactome" id="R-PFA-379716">
    <property type="pathway name" value="Cytosolic tRNA aminoacylation"/>
</dbReference>
<dbReference type="Reactome" id="R-PFA-379726">
    <property type="pathway name" value="Mitochondrial tRNA aminoacylation"/>
</dbReference>
<dbReference type="Reactome" id="R-PFA-71737">
    <property type="pathway name" value="Pyrophosphate hydrolysis"/>
</dbReference>
<dbReference type="Proteomes" id="UP000001450">
    <property type="component" value="Chromosome 3"/>
</dbReference>
<dbReference type="GO" id="GO:0005737">
    <property type="term" value="C:cytoplasm"/>
    <property type="evidence" value="ECO:0007669"/>
    <property type="project" value="InterPro"/>
</dbReference>
<dbReference type="GO" id="GO:0004427">
    <property type="term" value="F:inorganic diphosphate phosphatase activity"/>
    <property type="evidence" value="ECO:0000318"/>
    <property type="project" value="GO_Central"/>
</dbReference>
<dbReference type="GO" id="GO:0000287">
    <property type="term" value="F:magnesium ion binding"/>
    <property type="evidence" value="ECO:0007669"/>
    <property type="project" value="InterPro"/>
</dbReference>
<dbReference type="GO" id="GO:0006796">
    <property type="term" value="P:phosphate-containing compound metabolic process"/>
    <property type="evidence" value="ECO:0000318"/>
    <property type="project" value="GO_Central"/>
</dbReference>
<dbReference type="CDD" id="cd00412">
    <property type="entry name" value="pyrophosphatase"/>
    <property type="match status" value="1"/>
</dbReference>
<dbReference type="FunFam" id="3.90.80.10:FF:000010">
    <property type="entry name" value="Probable inorganic pyrophosphatase"/>
    <property type="match status" value="1"/>
</dbReference>
<dbReference type="Gene3D" id="3.90.80.10">
    <property type="entry name" value="Inorganic pyrophosphatase"/>
    <property type="match status" value="1"/>
</dbReference>
<dbReference type="InterPro" id="IPR008162">
    <property type="entry name" value="Pyrophosphatase"/>
</dbReference>
<dbReference type="InterPro" id="IPR036649">
    <property type="entry name" value="Pyrophosphatase_sf"/>
</dbReference>
<dbReference type="PANTHER" id="PTHR10286">
    <property type="entry name" value="INORGANIC PYROPHOSPHATASE"/>
    <property type="match status" value="1"/>
</dbReference>
<dbReference type="Pfam" id="PF00719">
    <property type="entry name" value="Pyrophosphatase"/>
    <property type="match status" value="1"/>
</dbReference>
<dbReference type="SUPFAM" id="SSF50324">
    <property type="entry name" value="Inorganic pyrophosphatase"/>
    <property type="match status" value="1"/>
</dbReference>
<dbReference type="PROSITE" id="PS00387">
    <property type="entry name" value="PPASE"/>
    <property type="match status" value="1"/>
</dbReference>
<protein>
    <recommendedName>
        <fullName>Probable inorganic pyrophosphatase</fullName>
        <ecNumber>3.6.1.1</ecNumber>
    </recommendedName>
    <alternativeName>
        <fullName>Pyrophosphate phospho-hydrolase</fullName>
        <shortName>PPase</shortName>
    </alternativeName>
</protein>
<evidence type="ECO:0000250" key="1"/>
<evidence type="ECO:0000305" key="2"/>
<evidence type="ECO:0007829" key="3">
    <source>
        <dbReference type="PDB" id="5WRU"/>
    </source>
</evidence>
<accession>O77392</accession>
<comment type="catalytic activity">
    <reaction>
        <text>diphosphate + H2O = 2 phosphate + H(+)</text>
        <dbReference type="Rhea" id="RHEA:24576"/>
        <dbReference type="ChEBI" id="CHEBI:15377"/>
        <dbReference type="ChEBI" id="CHEBI:15378"/>
        <dbReference type="ChEBI" id="CHEBI:33019"/>
        <dbReference type="ChEBI" id="CHEBI:43474"/>
        <dbReference type="EC" id="3.6.1.1"/>
    </reaction>
</comment>
<comment type="cofactor">
    <cofactor evidence="1">
        <name>Mg(2+)</name>
        <dbReference type="ChEBI" id="CHEBI:18420"/>
    </cofactor>
</comment>
<comment type="similarity">
    <text evidence="2">Belongs to the PPase family.</text>
</comment>